<gene>
    <name evidence="6" type="primary">AQP9</name>
</gene>
<name>AQP9_MILTA</name>
<protein>
    <recommendedName>
        <fullName evidence="6">Aquaporin-9</fullName>
        <shortName evidence="6">AQP-9</shortName>
    </recommendedName>
</protein>
<keyword id="KW-1003">Cell membrane</keyword>
<keyword id="KW-0325">Glycoprotein</keyword>
<keyword id="KW-0472">Membrane</keyword>
<keyword id="KW-0677">Repeat</keyword>
<keyword id="KW-0346">Stress response</keyword>
<keyword id="KW-0812">Transmembrane</keyword>
<keyword id="KW-1133">Transmembrane helix</keyword>
<keyword id="KW-0813">Transport</keyword>
<evidence type="ECO:0000250" key="1">
    <source>
        <dbReference type="UniProtKB" id="Q96PS8"/>
    </source>
</evidence>
<evidence type="ECO:0000255" key="2"/>
<evidence type="ECO:0000255" key="3">
    <source>
        <dbReference type="PROSITE-ProRule" id="PRU00498"/>
    </source>
</evidence>
<evidence type="ECO:0000269" key="4">
    <source>
    </source>
</evidence>
<evidence type="ECO:0000269" key="5">
    <source>
    </source>
</evidence>
<evidence type="ECO:0000303" key="6">
    <source>
    </source>
</evidence>
<evidence type="ECO:0000305" key="7"/>
<evidence type="ECO:0000305" key="8">
    <source>
    </source>
</evidence>
<reference key="1">
    <citation type="journal article" date="2013" name="Bioinf. Biol. Insights">
        <title>The aquaporin channel repertoire of the tardigrade Milnesium tardigradum.</title>
        <authorList>
            <person name="Grohme M.A."/>
            <person name="Mali B."/>
            <person name="Welnicz W."/>
            <person name="Michel S."/>
            <person name="Schill R.O."/>
            <person name="Frohme M."/>
        </authorList>
    </citation>
    <scope>NUCLEOTIDE SEQUENCE [MRNA]</scope>
    <scope>FUNCTION</scope>
    <scope>TRANSPORTER ACTIVITY</scope>
    <scope>DOMAIN</scope>
    <scope>SITE</scope>
    <scope>INDUCTION</scope>
</reference>
<reference key="2">
    <citation type="journal article" date="2012" name="PLoS ONE">
        <title>Comparative proteome analysis of Milnesium tardigradum in early embryonic state versus adults in active and anhydrobiotic state.</title>
        <authorList>
            <person name="Schokraie E."/>
            <person name="Warnken U."/>
            <person name="Hotz-Wagenblatt A."/>
            <person name="Grohme M.A."/>
            <person name="Hengherr S."/>
            <person name="Foerster F."/>
            <person name="Schill R.O."/>
            <person name="Frohme M."/>
            <person name="Dandekar T."/>
            <person name="Schnoelzer M."/>
        </authorList>
    </citation>
    <scope>IDENTIFICATION BY MASS SPECTROMETRY</scope>
    <scope>INDUCTION</scope>
</reference>
<dbReference type="EMBL" id="JN378744">
    <property type="protein sequence ID" value="AEP14563.1"/>
    <property type="molecule type" value="mRNA"/>
</dbReference>
<dbReference type="SMR" id="G5CTG6"/>
<dbReference type="GlyCosmos" id="G5CTG6">
    <property type="glycosylation" value="2 sites, No reported glycans"/>
</dbReference>
<dbReference type="GO" id="GO:0005886">
    <property type="term" value="C:plasma membrane"/>
    <property type="evidence" value="ECO:0007669"/>
    <property type="project" value="UniProtKB-SubCell"/>
</dbReference>
<dbReference type="GO" id="GO:0015254">
    <property type="term" value="F:glycerol channel activity"/>
    <property type="evidence" value="ECO:0007669"/>
    <property type="project" value="TreeGrafter"/>
</dbReference>
<dbReference type="GO" id="GO:0015166">
    <property type="term" value="F:polyol transmembrane transporter activity"/>
    <property type="evidence" value="ECO:0000250"/>
    <property type="project" value="UniProtKB"/>
</dbReference>
<dbReference type="GO" id="GO:0005345">
    <property type="term" value="F:purine nucleobase transmembrane transporter activity"/>
    <property type="evidence" value="ECO:0000250"/>
    <property type="project" value="UniProtKB"/>
</dbReference>
<dbReference type="GO" id="GO:0005350">
    <property type="term" value="F:pyrimidine nucleobase transmembrane transporter activity"/>
    <property type="evidence" value="ECO:0000250"/>
    <property type="project" value="UniProtKB"/>
</dbReference>
<dbReference type="GO" id="GO:0015204">
    <property type="term" value="F:urea transmembrane transporter activity"/>
    <property type="evidence" value="ECO:0000250"/>
    <property type="project" value="UniProtKB"/>
</dbReference>
<dbReference type="GO" id="GO:0015250">
    <property type="term" value="F:water channel activity"/>
    <property type="evidence" value="ECO:0007669"/>
    <property type="project" value="TreeGrafter"/>
</dbReference>
<dbReference type="GO" id="GO:0015837">
    <property type="term" value="P:amine transport"/>
    <property type="evidence" value="ECO:0000250"/>
    <property type="project" value="UniProtKB"/>
</dbReference>
<dbReference type="GO" id="GO:0015791">
    <property type="term" value="P:polyol transmembrane transport"/>
    <property type="evidence" value="ECO:0000250"/>
    <property type="project" value="UniProtKB"/>
</dbReference>
<dbReference type="GO" id="GO:0006863">
    <property type="term" value="P:purine nucleobase transport"/>
    <property type="evidence" value="ECO:0000250"/>
    <property type="project" value="UniProtKB"/>
</dbReference>
<dbReference type="GO" id="GO:0015855">
    <property type="term" value="P:pyrimidine nucleobase transport"/>
    <property type="evidence" value="ECO:0000250"/>
    <property type="project" value="UniProtKB"/>
</dbReference>
<dbReference type="Gene3D" id="1.20.1080.10">
    <property type="entry name" value="Glycerol uptake facilitator protein"/>
    <property type="match status" value="1"/>
</dbReference>
<dbReference type="InterPro" id="IPR023271">
    <property type="entry name" value="Aquaporin-like"/>
</dbReference>
<dbReference type="InterPro" id="IPR000425">
    <property type="entry name" value="MIP"/>
</dbReference>
<dbReference type="InterPro" id="IPR050363">
    <property type="entry name" value="MIP/Aquaporin"/>
</dbReference>
<dbReference type="PANTHER" id="PTHR43829">
    <property type="entry name" value="AQUAPORIN OR AQUAGLYCEROPORIN RELATED"/>
    <property type="match status" value="1"/>
</dbReference>
<dbReference type="PANTHER" id="PTHR43829:SF9">
    <property type="entry name" value="AQUAPORIN-9"/>
    <property type="match status" value="1"/>
</dbReference>
<dbReference type="Pfam" id="PF00230">
    <property type="entry name" value="MIP"/>
    <property type="match status" value="1"/>
</dbReference>
<dbReference type="PRINTS" id="PR00783">
    <property type="entry name" value="MINTRINSICP"/>
</dbReference>
<dbReference type="SUPFAM" id="SSF81338">
    <property type="entry name" value="Aquaporin-like"/>
    <property type="match status" value="1"/>
</dbReference>
<sequence length="281" mass="31066">MGAFVNTKVYIENKNIRDWLSEALSMFMYMSLLLGSAATGHFSGREDDALFGVIFQGFSITFGIYIGGAMSGAIINPALTLAVALLGKISWRKCIVLQSAQYIGSFIASAVVYLIYNDSLDAFGAGANFTATEPGVFRKDVAGIWSTFPKTYLKERGAIFNQIFCSMLLTFGFLAISDYKNFRPSKGLFPIAVGLLVMTVFLAFSYSTGAAMNPARDFSPRLWSLIIGYGIEVFSYNQYEWFWIPWLMPYVGAMLGALIYQLLIGAQWSKGQKGESKHKDP</sequence>
<organism>
    <name type="scientific">Milnesium tardigradum</name>
    <name type="common">Water bear</name>
    <name type="synonym">Tardigrade</name>
    <dbReference type="NCBI Taxonomy" id="46460"/>
    <lineage>
        <taxon>Eukaryota</taxon>
        <taxon>Metazoa</taxon>
        <taxon>Ecdysozoa</taxon>
        <taxon>Tardigrada</taxon>
        <taxon>Eutardigrada</taxon>
        <taxon>Apochela</taxon>
        <taxon>Milnesiidae</taxon>
        <taxon>Milnesium</taxon>
    </lineage>
</organism>
<feature type="chain" id="PRO_0000440210" description="Aquaporin-9">
    <location>
        <begin position="1"/>
        <end position="281"/>
    </location>
</feature>
<feature type="topological domain" description="Cytoplasmic" evidence="1">
    <location>
        <begin position="1"/>
        <end position="17"/>
    </location>
</feature>
<feature type="transmembrane region" description="Helical; Name=1" evidence="1">
    <location>
        <begin position="18"/>
        <end position="36"/>
    </location>
</feature>
<feature type="topological domain" description="Extracellular" evidence="7">
    <location>
        <begin position="37"/>
        <end position="50"/>
    </location>
</feature>
<feature type="transmembrane region" description="Helical; Name=2" evidence="1">
    <location>
        <begin position="51"/>
        <end position="69"/>
    </location>
</feature>
<feature type="topological domain" description="Cytoplasmic" evidence="1">
    <location>
        <begin position="70"/>
        <end position="71"/>
    </location>
</feature>
<feature type="intramembrane region" description="Discontinuously helical" evidence="1">
    <location>
        <begin position="72"/>
        <end position="84"/>
    </location>
</feature>
<feature type="topological domain" description="Cytoplasmic" evidence="1">
    <location>
        <begin position="85"/>
        <end position="90"/>
    </location>
</feature>
<feature type="transmembrane region" description="Helical; Name=3" evidence="1">
    <location>
        <begin position="91"/>
        <end position="115"/>
    </location>
</feature>
<feature type="topological domain" description="Extracellular" evidence="1">
    <location>
        <begin position="116"/>
        <end position="157"/>
    </location>
</feature>
<feature type="transmembrane region" description="Helical; Name=4" evidence="1">
    <location>
        <begin position="158"/>
        <end position="175"/>
    </location>
</feature>
<feature type="topological domain" description="Cytoplasmic" evidence="1">
    <location>
        <begin position="176"/>
        <end position="187"/>
    </location>
</feature>
<feature type="transmembrane region" description="Helical; Name=5" evidence="1">
    <location>
        <begin position="188"/>
        <end position="204"/>
    </location>
</feature>
<feature type="topological domain" description="Extracellular" evidence="1">
    <location>
        <begin position="205"/>
        <end position="207"/>
    </location>
</feature>
<feature type="intramembrane region" description="Discontinuously helical" evidence="1">
    <location>
        <begin position="208"/>
        <end position="222"/>
    </location>
</feature>
<feature type="topological domain" description="Extracellular" evidence="1">
    <location>
        <begin position="223"/>
        <end position="241"/>
    </location>
</feature>
<feature type="transmembrane region" description="Helical; Name=6" evidence="1">
    <location>
        <begin position="242"/>
        <end position="262"/>
    </location>
</feature>
<feature type="topological domain" description="Cytoplasmic" evidence="1">
    <location>
        <begin position="263"/>
        <end position="281"/>
    </location>
</feature>
<feature type="short sequence motif" description="NPA 1" evidence="8">
    <location>
        <begin position="76"/>
        <end position="78"/>
    </location>
</feature>
<feature type="short sequence motif" description="NPA 2" evidence="8">
    <location>
        <begin position="213"/>
        <end position="215"/>
    </location>
</feature>
<feature type="glycosylation site" description="N-linked (GlcNAc...) asparagine" evidence="3">
    <location>
        <position position="117"/>
    </location>
</feature>
<feature type="glycosylation site" description="N-linked (GlcNAc...) asparagine" evidence="3">
    <location>
        <position position="128"/>
    </location>
</feature>
<accession>G5CTG6</accession>
<comment type="function">
    <text evidence="8">Aquaglyceroporin that may modulate the water content and osmolytes during anhydrobiosis (PubMed:23761966).</text>
</comment>
<comment type="catalytic activity">
    <reaction evidence="8">
        <text>H2O(in) = H2O(out)</text>
        <dbReference type="Rhea" id="RHEA:29667"/>
        <dbReference type="ChEBI" id="CHEBI:15377"/>
    </reaction>
</comment>
<comment type="subcellular location">
    <subcellularLocation>
        <location evidence="7">Cell membrane</location>
        <topology evidence="2">Multi-pass membrane protein</topology>
    </subcellularLocation>
</comment>
<comment type="induction">
    <text evidence="4 5">Expressed in early embryonic state, adult active, and adult anhydrobiotic state (PubMed:23029181). Transcript abundance is low but expression is slightly up-regulated in the inactive stage (during anhydrobiois) (PubMed:23761966).</text>
</comment>
<comment type="domain">
    <text evidence="8">Aquaporins contain two tandem repeats each containing three membrane-spanning domains and a pore-forming loop with the signature motif Asn-Pro-Ala (NPA).</text>
</comment>
<comment type="similarity">
    <text evidence="7">Belongs to the MIP/aquaporin (TC 1.A.8) family.</text>
</comment>
<proteinExistence type="evidence at protein level"/>